<comment type="function">
    <text evidence="1 3">Neurotoxin that induces paralysis when injected into crabs (By similarity). May function in antimicrobial activity as it displays inhibitory activity towards the B.licheniformis enzyme subtilisin A (SUBTA) and the recombinant S.maltophilia protease 1 (rStmPr1) enzyme (Ref.1). Also displays inhibitory activity against various proteases including the porcine pancreatic elastase (PPE) and proteinase K (PK) (Ref.1).</text>
</comment>
<comment type="subcellular location">
    <subcellularLocation>
        <location evidence="3">Secreted</location>
    </subcellularLocation>
</comment>
<comment type="mass spectrometry" mass="4970.68" method="Electrospray" evidence="3"/>
<comment type="miscellaneous">
    <text evidence="3">Negative results: does not show any inhibitory activity against chymotrypsin, trypsin or papain.</text>
</comment>
<comment type="similarity">
    <text evidence="5">Belongs to the sea anemone type 3 (BDS) potassium channel toxin family.</text>
</comment>
<proteinExistence type="evidence at protein level"/>
<organism evidence="4">
    <name type="scientific">Condylactis gigantea</name>
    <name type="common">Giant Caribbean anemone</name>
    <name type="synonym">Condylactis passiflora</name>
    <dbReference type="NCBI Taxonomy" id="47073"/>
    <lineage>
        <taxon>Eukaryota</taxon>
        <taxon>Metazoa</taxon>
        <taxon>Cnidaria</taxon>
        <taxon>Anthozoa</taxon>
        <taxon>Hexacorallia</taxon>
        <taxon>Actiniaria</taxon>
        <taxon>Actiniidae</taxon>
        <taxon>Condylactis</taxon>
    </lineage>
</organism>
<name>BDS3_CONGI</name>
<evidence type="ECO:0000250" key="1">
    <source>
        <dbReference type="UniProtKB" id="C0HK75"/>
    </source>
</evidence>
<evidence type="ECO:0000250" key="2">
    <source>
        <dbReference type="UniProtKB" id="P11494"/>
    </source>
</evidence>
<evidence type="ECO:0000269" key="3">
    <source ref="1"/>
</evidence>
<evidence type="ECO:0000303" key="4">
    <source ref="1"/>
</evidence>
<evidence type="ECO:0000305" key="5"/>
<accession>C0HM42</accession>
<sequence length="48" mass="5191">ALLSCKCEANSGYGDKWLFHGGCPNGYGYNERCFIKPGAVCCYPPSGR</sequence>
<keyword id="KW-0027">Amidation</keyword>
<keyword id="KW-0903">Direct protein sequencing</keyword>
<keyword id="KW-1015">Disulfide bond</keyword>
<keyword id="KW-0528">Neurotoxin</keyword>
<keyword id="KW-0646">Protease inhibitor</keyword>
<keyword id="KW-0964">Secreted</keyword>
<keyword id="KW-0800">Toxin</keyword>
<feature type="peptide" id="PRO_0000458655" description="U-actitoxin-Cgg3" evidence="3">
    <location>
        <begin position="1"/>
        <end position="48"/>
    </location>
</feature>
<feature type="propeptide" id="PRO_0000458656" description="Removed in mature form" evidence="3">
    <location>
        <begin position="47"/>
        <end position="48"/>
    </location>
</feature>
<feature type="modified residue" description="Serine amide" evidence="3">
    <location>
        <position position="46"/>
    </location>
</feature>
<feature type="disulfide bond" evidence="2">
    <location>
        <begin position="5"/>
        <end position="41"/>
    </location>
</feature>
<feature type="disulfide bond" evidence="2">
    <location>
        <begin position="7"/>
        <end position="33"/>
    </location>
</feature>
<feature type="disulfide bond" evidence="2">
    <location>
        <begin position="23"/>
        <end position="42"/>
    </location>
</feature>
<reference evidence="5" key="1">
    <citation type="journal article" date="2023" name="Biochimie">
        <title>CogiTx1: A novel subtilisin A inhibitor isolated from the sea anemone Condylactis gigantea belonging to the defensin 4 protein family.</title>
        <authorList>
            <person name="Rojas L."/>
            <person name="Cabrera-Munoz A."/>
            <person name="Espinosa L.A."/>
            <person name="Montane S."/>
            <person name="Alvarez-Lajonchere L."/>
            <person name="Mojarena J.D."/>
            <person name="Moya G."/>
            <person name="Lorenzo J."/>
            <person name="Gonzalez L.J."/>
            <person name="Betzel C."/>
            <person name="Alonso del Rivero M."/>
        </authorList>
    </citation>
    <scope>PROTEIN SEQUENCE OF 1-20</scope>
    <scope>NUCLEOTIDE SEQUENCE [MRNA] OF 9-48</scope>
    <scope>IDENTIFICATION BY MASS SPECTROMETRY</scope>
    <scope>FUNCTION</scope>
    <scope>SUBCELLULAR LOCATION</scope>
    <scope>AMIDATION AT SER-46</scope>
    <scope>PROTEOLYTIC CLEAVAGE</scope>
</reference>
<protein>
    <recommendedName>
        <fullName evidence="5">U-actitoxin-Cgg3</fullName>
        <shortName evidence="4">U-AITX-Cgg3</shortName>
    </recommendedName>
    <alternativeName>
        <fullName evidence="4">Peptide CogiTx1</fullName>
    </alternativeName>
</protein>
<dbReference type="SMR" id="C0HM42"/>
<dbReference type="GO" id="GO:0005576">
    <property type="term" value="C:extracellular region"/>
    <property type="evidence" value="ECO:0000314"/>
    <property type="project" value="UniProtKB"/>
</dbReference>
<dbReference type="GO" id="GO:0042151">
    <property type="term" value="C:nematocyst"/>
    <property type="evidence" value="ECO:0007669"/>
    <property type="project" value="InterPro"/>
</dbReference>
<dbReference type="GO" id="GO:0008200">
    <property type="term" value="F:ion channel inhibitor activity"/>
    <property type="evidence" value="ECO:0007669"/>
    <property type="project" value="InterPro"/>
</dbReference>
<dbReference type="GO" id="GO:0030414">
    <property type="term" value="F:peptidase inhibitor activity"/>
    <property type="evidence" value="ECO:0000314"/>
    <property type="project" value="UniProtKB"/>
</dbReference>
<dbReference type="GO" id="GO:0090729">
    <property type="term" value="F:toxin activity"/>
    <property type="evidence" value="ECO:0007669"/>
    <property type="project" value="UniProtKB-KW"/>
</dbReference>
<dbReference type="Gene3D" id="2.20.20.10">
    <property type="entry name" value="Anthopleurin-A"/>
    <property type="match status" value="1"/>
</dbReference>
<dbReference type="InterPro" id="IPR012414">
    <property type="entry name" value="BDS_K_chnl_tox"/>
</dbReference>
<dbReference type="InterPro" id="IPR023355">
    <property type="entry name" value="Myo_ane_neurotoxin_sf"/>
</dbReference>
<dbReference type="Pfam" id="PF07936">
    <property type="entry name" value="Defensin_4"/>
    <property type="match status" value="1"/>
</dbReference>
<dbReference type="SUPFAM" id="SSF57392">
    <property type="entry name" value="Defensin-like"/>
    <property type="match status" value="1"/>
</dbReference>